<dbReference type="EMBL" id="CH408159">
    <property type="protein sequence ID" value="EDK40296.2"/>
    <property type="molecule type" value="Genomic_DNA"/>
</dbReference>
<dbReference type="RefSeq" id="XP_001483665.1">
    <property type="nucleotide sequence ID" value="XM_001483615.1"/>
</dbReference>
<dbReference type="SMR" id="A5DM93"/>
<dbReference type="FunCoup" id="A5DM93">
    <property type="interactions" value="49"/>
</dbReference>
<dbReference type="STRING" id="294746.A5DM93"/>
<dbReference type="GeneID" id="5125648"/>
<dbReference type="KEGG" id="pgu:PGUG_04394"/>
<dbReference type="VEuPathDB" id="FungiDB:PGUG_04394"/>
<dbReference type="eggNOG" id="ENOG502S2G8">
    <property type="taxonomic scope" value="Eukaryota"/>
</dbReference>
<dbReference type="HOGENOM" id="CLU_147520_0_0_1"/>
<dbReference type="InParanoid" id="A5DM93"/>
<dbReference type="OMA" id="YRWARVG"/>
<dbReference type="OrthoDB" id="5576752at2759"/>
<dbReference type="Proteomes" id="UP000001997">
    <property type="component" value="Unassembled WGS sequence"/>
</dbReference>
<dbReference type="GO" id="GO:0005743">
    <property type="term" value="C:mitochondrial inner membrane"/>
    <property type="evidence" value="ECO:0007669"/>
    <property type="project" value="UniProtKB-SubCell"/>
</dbReference>
<dbReference type="GO" id="GO:0034551">
    <property type="term" value="P:mitochondrial respiratory chain complex III assembly"/>
    <property type="evidence" value="ECO:0007669"/>
    <property type="project" value="TreeGrafter"/>
</dbReference>
<dbReference type="InterPro" id="IPR012420">
    <property type="entry name" value="Cbp4"/>
</dbReference>
<dbReference type="PANTHER" id="PTHR28202">
    <property type="entry name" value="ASSEMBLY FACTOR CBP4"/>
    <property type="match status" value="1"/>
</dbReference>
<dbReference type="PANTHER" id="PTHR28202:SF1">
    <property type="entry name" value="ASSEMBLY FACTOR CBP4"/>
    <property type="match status" value="1"/>
</dbReference>
<dbReference type="Pfam" id="PF07960">
    <property type="entry name" value="CBP4"/>
    <property type="match status" value="1"/>
</dbReference>
<evidence type="ECO:0000250" key="1"/>
<evidence type="ECO:0000255" key="2"/>
<evidence type="ECO:0000256" key="3">
    <source>
        <dbReference type="SAM" id="MobiDB-lite"/>
    </source>
</evidence>
<evidence type="ECO:0000305" key="4"/>
<name>CBP4_PICGU</name>
<comment type="function">
    <text evidence="1">Essential for the assembly of ubiquinol-cytochrome c reductase. It has a direct effect on the correct occurrence of the Rieske protein, core 4, core 5 and apocytochrome b (By similarity).</text>
</comment>
<comment type="subcellular location">
    <subcellularLocation>
        <location evidence="1">Mitochondrion inner membrane</location>
        <topology evidence="1">Single-pass membrane protein</topology>
    </subcellularLocation>
</comment>
<comment type="similarity">
    <text evidence="4">Belongs to the CBP4 family.</text>
</comment>
<feature type="chain" id="PRO_0000330135" description="Assembly factor CBP4">
    <location>
        <begin position="1"/>
        <end position="143"/>
    </location>
</feature>
<feature type="transmembrane region" description="Helical" evidence="2">
    <location>
        <begin position="13"/>
        <end position="32"/>
    </location>
</feature>
<feature type="region of interest" description="Disordered" evidence="3">
    <location>
        <begin position="110"/>
        <end position="131"/>
    </location>
</feature>
<feature type="coiled-coil region" evidence="2">
    <location>
        <begin position="103"/>
        <end position="139"/>
    </location>
</feature>
<feature type="compositionally biased region" description="Basic and acidic residues" evidence="3">
    <location>
        <begin position="114"/>
        <end position="131"/>
    </location>
</feature>
<reference key="1">
    <citation type="journal article" date="2009" name="Nature">
        <title>Evolution of pathogenicity and sexual reproduction in eight Candida genomes.</title>
        <authorList>
            <person name="Butler G."/>
            <person name="Rasmussen M.D."/>
            <person name="Lin M.F."/>
            <person name="Santos M.A.S."/>
            <person name="Sakthikumar S."/>
            <person name="Munro C.A."/>
            <person name="Rheinbay E."/>
            <person name="Grabherr M."/>
            <person name="Forche A."/>
            <person name="Reedy J.L."/>
            <person name="Agrafioti I."/>
            <person name="Arnaud M.B."/>
            <person name="Bates S."/>
            <person name="Brown A.J.P."/>
            <person name="Brunke S."/>
            <person name="Costanzo M.C."/>
            <person name="Fitzpatrick D.A."/>
            <person name="de Groot P.W.J."/>
            <person name="Harris D."/>
            <person name="Hoyer L.L."/>
            <person name="Hube B."/>
            <person name="Klis F.M."/>
            <person name="Kodira C."/>
            <person name="Lennard N."/>
            <person name="Logue M.E."/>
            <person name="Martin R."/>
            <person name="Neiman A.M."/>
            <person name="Nikolaou E."/>
            <person name="Quail M.A."/>
            <person name="Quinn J."/>
            <person name="Santos M.C."/>
            <person name="Schmitzberger F.F."/>
            <person name="Sherlock G."/>
            <person name="Shah P."/>
            <person name="Silverstein K.A.T."/>
            <person name="Skrzypek M.S."/>
            <person name="Soll D."/>
            <person name="Staggs R."/>
            <person name="Stansfield I."/>
            <person name="Stumpf M.P.H."/>
            <person name="Sudbery P.E."/>
            <person name="Srikantha T."/>
            <person name="Zeng Q."/>
            <person name="Berman J."/>
            <person name="Berriman M."/>
            <person name="Heitman J."/>
            <person name="Gow N.A.R."/>
            <person name="Lorenz M.C."/>
            <person name="Birren B.W."/>
            <person name="Kellis M."/>
            <person name="Cuomo C.A."/>
        </authorList>
    </citation>
    <scope>NUCLEOTIDE SEQUENCE [LARGE SCALE GENOMIC DNA]</scope>
    <source>
        <strain>ATCC 6260 / CBS 566 / DSM 6381 / JCM 1539 / NBRC 10279 / NRRL Y-324</strain>
    </source>
</reference>
<protein>
    <recommendedName>
        <fullName>Assembly factor CBP4</fullName>
    </recommendedName>
    <alternativeName>
        <fullName>Cytochrome b mRNA-processing protein 4</fullName>
    </alternativeName>
</protein>
<keyword id="KW-0143">Chaperone</keyword>
<keyword id="KW-0175">Coiled coil</keyword>
<keyword id="KW-0472">Membrane</keyword>
<keyword id="KW-0496">Mitochondrion</keyword>
<keyword id="KW-0999">Mitochondrion inner membrane</keyword>
<keyword id="KW-1185">Reference proteome</keyword>
<keyword id="KW-0812">Transmembrane</keyword>
<keyword id="KW-1133">Transmembrane helix</keyword>
<gene>
    <name type="primary">CBP4</name>
    <name type="ORF">PGUG_04394</name>
</gene>
<organism>
    <name type="scientific">Meyerozyma guilliermondii (strain ATCC 6260 / CBS 566 / DSM 6381 / JCM 1539 / NBRC 10279 / NRRL Y-324)</name>
    <name type="common">Yeast</name>
    <name type="synonym">Candida guilliermondii</name>
    <dbReference type="NCBI Taxonomy" id="294746"/>
    <lineage>
        <taxon>Eukaryota</taxon>
        <taxon>Fungi</taxon>
        <taxon>Dikarya</taxon>
        <taxon>Ascomycota</taxon>
        <taxon>Saccharomycotina</taxon>
        <taxon>Pichiomycetes</taxon>
        <taxon>Debaryomycetaceae</taxon>
        <taxon>Meyerozyma</taxon>
    </lineage>
</organism>
<proteinExistence type="inferred from homology"/>
<accession>A5DM93</accession>
<sequence>MSTRPLWYRWARVGFYGGAIIATGVVLFKYTTPTDEQLIASFSPEVRAEYEKSRELRQKEQQALMEIVKKTSASNDPIWKTGSIKSPFEKDGRYVDPKLVDPQALLRESAAEQQRIETEEANRKMEETERLLNEKRKKWWSWK</sequence>